<feature type="chain" id="PRO_1000049160" description="Homoserine kinase">
    <location>
        <begin position="1"/>
        <end position="315"/>
    </location>
</feature>
<feature type="binding site" evidence="1">
    <location>
        <begin position="97"/>
        <end position="107"/>
    </location>
    <ligand>
        <name>ATP</name>
        <dbReference type="ChEBI" id="CHEBI:30616"/>
    </ligand>
</feature>
<gene>
    <name evidence="1" type="primary">thrB</name>
    <name type="ordered locus">PMN2A_0031</name>
</gene>
<name>KHSE_PROMT</name>
<sequence length="315" mass="33126">MGPPKIGQTVVVEVPSTTANIGPGFDCLGAALDLSNQFTIKRIEGNAERFELIMESTEGNHLRGGPENLFYRAAQRVWRTAGIEPVALEARVKLAVPPARGLGSSATAIVAGLVGANALAGYPLPKEKLLELAIDIEGHPDNVVPSLIGGLCVTAKTASDRWRVVRCDWDKSIKAVVAIPSIRLSTSEARRVMPENIPVNDAVINLGALTLLLQGLRTGNEDLITDGMHDKLHEPYRWGLIKGGLEVREAAKAAGALGCAISGAGPSILALCKATKGREVSVAMVKAWEAAGVASRAPLMSLQLTGSECISNTFG</sequence>
<evidence type="ECO:0000255" key="1">
    <source>
        <dbReference type="HAMAP-Rule" id="MF_00384"/>
    </source>
</evidence>
<protein>
    <recommendedName>
        <fullName evidence="1">Homoserine kinase</fullName>
        <shortName evidence="1">HK</shortName>
        <shortName evidence="1">HSK</shortName>
        <ecNumber evidence="1">2.7.1.39</ecNumber>
    </recommendedName>
</protein>
<keyword id="KW-0028">Amino-acid biosynthesis</keyword>
<keyword id="KW-0067">ATP-binding</keyword>
<keyword id="KW-0963">Cytoplasm</keyword>
<keyword id="KW-0418">Kinase</keyword>
<keyword id="KW-0547">Nucleotide-binding</keyword>
<keyword id="KW-1185">Reference proteome</keyword>
<keyword id="KW-0791">Threonine biosynthesis</keyword>
<keyword id="KW-0808">Transferase</keyword>
<comment type="function">
    <text evidence="1">Catalyzes the ATP-dependent phosphorylation of L-homoserine to L-homoserine phosphate.</text>
</comment>
<comment type="catalytic activity">
    <reaction evidence="1">
        <text>L-homoserine + ATP = O-phospho-L-homoserine + ADP + H(+)</text>
        <dbReference type="Rhea" id="RHEA:13985"/>
        <dbReference type="ChEBI" id="CHEBI:15378"/>
        <dbReference type="ChEBI" id="CHEBI:30616"/>
        <dbReference type="ChEBI" id="CHEBI:57476"/>
        <dbReference type="ChEBI" id="CHEBI:57590"/>
        <dbReference type="ChEBI" id="CHEBI:456216"/>
        <dbReference type="EC" id="2.7.1.39"/>
    </reaction>
</comment>
<comment type="pathway">
    <text evidence="1">Amino-acid biosynthesis; L-threonine biosynthesis; L-threonine from L-aspartate: step 4/5.</text>
</comment>
<comment type="subcellular location">
    <subcellularLocation>
        <location evidence="1">Cytoplasm</location>
    </subcellularLocation>
</comment>
<comment type="similarity">
    <text evidence="1">Belongs to the GHMP kinase family. Homoserine kinase subfamily.</text>
</comment>
<accession>Q46LV5</accession>
<organism>
    <name type="scientific">Prochlorococcus marinus (strain NATL2A)</name>
    <dbReference type="NCBI Taxonomy" id="59920"/>
    <lineage>
        <taxon>Bacteria</taxon>
        <taxon>Bacillati</taxon>
        <taxon>Cyanobacteriota</taxon>
        <taxon>Cyanophyceae</taxon>
        <taxon>Synechococcales</taxon>
        <taxon>Prochlorococcaceae</taxon>
        <taxon>Prochlorococcus</taxon>
    </lineage>
</organism>
<proteinExistence type="inferred from homology"/>
<reference key="1">
    <citation type="journal article" date="2007" name="PLoS Genet.">
        <title>Patterns and implications of gene gain and loss in the evolution of Prochlorococcus.</title>
        <authorList>
            <person name="Kettler G.C."/>
            <person name="Martiny A.C."/>
            <person name="Huang K."/>
            <person name="Zucker J."/>
            <person name="Coleman M.L."/>
            <person name="Rodrigue S."/>
            <person name="Chen F."/>
            <person name="Lapidus A."/>
            <person name="Ferriera S."/>
            <person name="Johnson J."/>
            <person name="Steglich C."/>
            <person name="Church G.M."/>
            <person name="Richardson P."/>
            <person name="Chisholm S.W."/>
        </authorList>
    </citation>
    <scope>NUCLEOTIDE SEQUENCE [LARGE SCALE GENOMIC DNA]</scope>
    <source>
        <strain>NATL2A</strain>
    </source>
</reference>
<dbReference type="EC" id="2.7.1.39" evidence="1"/>
<dbReference type="EMBL" id="CP000095">
    <property type="protein sequence ID" value="AAZ57523.1"/>
    <property type="molecule type" value="Genomic_DNA"/>
</dbReference>
<dbReference type="RefSeq" id="WP_011293565.1">
    <property type="nucleotide sequence ID" value="NC_007335.2"/>
</dbReference>
<dbReference type="SMR" id="Q46LV5"/>
<dbReference type="STRING" id="59920.PMN2A_0031"/>
<dbReference type="KEGG" id="pmn:PMN2A_0031"/>
<dbReference type="HOGENOM" id="CLU_041243_0_2_3"/>
<dbReference type="OrthoDB" id="9769912at2"/>
<dbReference type="PhylomeDB" id="Q46LV5"/>
<dbReference type="UniPathway" id="UPA00050">
    <property type="reaction ID" value="UER00064"/>
</dbReference>
<dbReference type="Proteomes" id="UP000002535">
    <property type="component" value="Chromosome"/>
</dbReference>
<dbReference type="GO" id="GO:0005737">
    <property type="term" value="C:cytoplasm"/>
    <property type="evidence" value="ECO:0007669"/>
    <property type="project" value="UniProtKB-SubCell"/>
</dbReference>
<dbReference type="GO" id="GO:0005524">
    <property type="term" value="F:ATP binding"/>
    <property type="evidence" value="ECO:0007669"/>
    <property type="project" value="UniProtKB-UniRule"/>
</dbReference>
<dbReference type="GO" id="GO:0004413">
    <property type="term" value="F:homoserine kinase activity"/>
    <property type="evidence" value="ECO:0007669"/>
    <property type="project" value="UniProtKB-UniRule"/>
</dbReference>
<dbReference type="GO" id="GO:0009088">
    <property type="term" value="P:threonine biosynthetic process"/>
    <property type="evidence" value="ECO:0007669"/>
    <property type="project" value="UniProtKB-UniRule"/>
</dbReference>
<dbReference type="Gene3D" id="3.30.230.10">
    <property type="match status" value="1"/>
</dbReference>
<dbReference type="Gene3D" id="3.30.70.890">
    <property type="entry name" value="GHMP kinase, C-terminal domain"/>
    <property type="match status" value="1"/>
</dbReference>
<dbReference type="HAMAP" id="MF_00384">
    <property type="entry name" value="Homoser_kinase"/>
    <property type="match status" value="1"/>
</dbReference>
<dbReference type="InterPro" id="IPR013750">
    <property type="entry name" value="GHMP_kinase_C_dom"/>
</dbReference>
<dbReference type="InterPro" id="IPR036554">
    <property type="entry name" value="GHMP_kinase_C_sf"/>
</dbReference>
<dbReference type="InterPro" id="IPR006204">
    <property type="entry name" value="GHMP_kinase_N_dom"/>
</dbReference>
<dbReference type="InterPro" id="IPR006203">
    <property type="entry name" value="GHMP_knse_ATP-bd_CS"/>
</dbReference>
<dbReference type="InterPro" id="IPR000870">
    <property type="entry name" value="Homoserine_kinase"/>
</dbReference>
<dbReference type="InterPro" id="IPR020568">
    <property type="entry name" value="Ribosomal_Su5_D2-typ_SF"/>
</dbReference>
<dbReference type="InterPro" id="IPR014721">
    <property type="entry name" value="Ribsml_uS5_D2-typ_fold_subgr"/>
</dbReference>
<dbReference type="NCBIfam" id="NF002288">
    <property type="entry name" value="PRK01212.1-4"/>
    <property type="match status" value="1"/>
</dbReference>
<dbReference type="NCBIfam" id="TIGR00191">
    <property type="entry name" value="thrB"/>
    <property type="match status" value="1"/>
</dbReference>
<dbReference type="PANTHER" id="PTHR20861:SF1">
    <property type="entry name" value="HOMOSERINE KINASE"/>
    <property type="match status" value="1"/>
</dbReference>
<dbReference type="PANTHER" id="PTHR20861">
    <property type="entry name" value="HOMOSERINE/4-DIPHOSPHOCYTIDYL-2-C-METHYL-D-ERYTHRITOL KINASE"/>
    <property type="match status" value="1"/>
</dbReference>
<dbReference type="Pfam" id="PF08544">
    <property type="entry name" value="GHMP_kinases_C"/>
    <property type="match status" value="1"/>
</dbReference>
<dbReference type="Pfam" id="PF00288">
    <property type="entry name" value="GHMP_kinases_N"/>
    <property type="match status" value="1"/>
</dbReference>
<dbReference type="PIRSF" id="PIRSF000676">
    <property type="entry name" value="Homoser_kin"/>
    <property type="match status" value="1"/>
</dbReference>
<dbReference type="PRINTS" id="PR00958">
    <property type="entry name" value="HOMSERKINASE"/>
</dbReference>
<dbReference type="SUPFAM" id="SSF55060">
    <property type="entry name" value="GHMP Kinase, C-terminal domain"/>
    <property type="match status" value="1"/>
</dbReference>
<dbReference type="SUPFAM" id="SSF54211">
    <property type="entry name" value="Ribosomal protein S5 domain 2-like"/>
    <property type="match status" value="1"/>
</dbReference>
<dbReference type="PROSITE" id="PS00627">
    <property type="entry name" value="GHMP_KINASES_ATP"/>
    <property type="match status" value="1"/>
</dbReference>